<comment type="similarity">
    <text evidence="1">Belongs to the universal ribosomal protein uS2 family.</text>
</comment>
<comment type="sequence caution" evidence="3">
    <conflict type="erroneous initiation">
        <sequence resource="EMBL-CDS" id="ABC62845"/>
    </conflict>
</comment>
<sequence>MAAPTVTMQQLIEAGSHFGHQTHRWNPRMKPYIFGARNGVHIIDLSQTVPLMARALDFVHATANAGGKVLFVGTKRQAQEPIAEAARSSGQHFVNHRWLGGMLTNWQTISKSIKELKSLEEQLSGETHGLTKKEVLNLTRKRDKLELSLGGIRDMGGVPDVMVVIDANKEDLAIKEANVLGIPVVGILDTNVDPSGIAFPVPGNDDAARAVRLYCDAFAQAASKNGGGANVGEMENPPVEATADA</sequence>
<keyword id="KW-1185">Reference proteome</keyword>
<keyword id="KW-0687">Ribonucleoprotein</keyword>
<keyword id="KW-0689">Ribosomal protein</keyword>
<feature type="chain" id="PRO_0000351989" description="Small ribosomal subunit protein uS2">
    <location>
        <begin position="1"/>
        <end position="245"/>
    </location>
</feature>
<feature type="region of interest" description="Disordered" evidence="2">
    <location>
        <begin position="226"/>
        <end position="245"/>
    </location>
</feature>
<organism>
    <name type="scientific">Erythrobacter litoralis (strain HTCC2594)</name>
    <dbReference type="NCBI Taxonomy" id="314225"/>
    <lineage>
        <taxon>Bacteria</taxon>
        <taxon>Pseudomonadati</taxon>
        <taxon>Pseudomonadota</taxon>
        <taxon>Alphaproteobacteria</taxon>
        <taxon>Sphingomonadales</taxon>
        <taxon>Erythrobacteraceae</taxon>
        <taxon>Erythrobacter/Porphyrobacter group</taxon>
        <taxon>Erythrobacter</taxon>
    </lineage>
</organism>
<protein>
    <recommendedName>
        <fullName evidence="1">Small ribosomal subunit protein uS2</fullName>
    </recommendedName>
    <alternativeName>
        <fullName evidence="3">30S ribosomal protein S2</fullName>
    </alternativeName>
</protein>
<name>RS2_ERYLH</name>
<reference key="1">
    <citation type="journal article" date="2009" name="J. Bacteriol.">
        <title>Complete genome sequence of Erythrobacter litoralis HTCC2594.</title>
        <authorList>
            <person name="Oh H.M."/>
            <person name="Giovannoni S.J."/>
            <person name="Ferriera S."/>
            <person name="Johnson J."/>
            <person name="Cho J.C."/>
        </authorList>
    </citation>
    <scope>NUCLEOTIDE SEQUENCE [LARGE SCALE GENOMIC DNA]</scope>
    <source>
        <strain>HTCC2594</strain>
    </source>
</reference>
<accession>Q2NBU6</accession>
<gene>
    <name evidence="1" type="primary">rpsB</name>
    <name type="ordered locus">ELI_03765</name>
</gene>
<dbReference type="EMBL" id="CP000157">
    <property type="protein sequence ID" value="ABC62845.1"/>
    <property type="status" value="ALT_INIT"/>
    <property type="molecule type" value="Genomic_DNA"/>
</dbReference>
<dbReference type="RefSeq" id="WP_011413721.1">
    <property type="nucleotide sequence ID" value="NC_007722.1"/>
</dbReference>
<dbReference type="SMR" id="Q2NBU6"/>
<dbReference type="STRING" id="314225.ELI_03765"/>
<dbReference type="KEGG" id="eli:ELI_03765"/>
<dbReference type="eggNOG" id="COG0052">
    <property type="taxonomic scope" value="Bacteria"/>
</dbReference>
<dbReference type="HOGENOM" id="CLU_040318_2_3_5"/>
<dbReference type="OrthoDB" id="9808036at2"/>
<dbReference type="Proteomes" id="UP000008808">
    <property type="component" value="Chromosome"/>
</dbReference>
<dbReference type="GO" id="GO:0022627">
    <property type="term" value="C:cytosolic small ribosomal subunit"/>
    <property type="evidence" value="ECO:0007669"/>
    <property type="project" value="TreeGrafter"/>
</dbReference>
<dbReference type="GO" id="GO:0003735">
    <property type="term" value="F:structural constituent of ribosome"/>
    <property type="evidence" value="ECO:0007669"/>
    <property type="project" value="InterPro"/>
</dbReference>
<dbReference type="GO" id="GO:0006412">
    <property type="term" value="P:translation"/>
    <property type="evidence" value="ECO:0007669"/>
    <property type="project" value="UniProtKB-UniRule"/>
</dbReference>
<dbReference type="CDD" id="cd01425">
    <property type="entry name" value="RPS2"/>
    <property type="match status" value="1"/>
</dbReference>
<dbReference type="FunFam" id="1.10.287.610:FF:000001">
    <property type="entry name" value="30S ribosomal protein S2"/>
    <property type="match status" value="1"/>
</dbReference>
<dbReference type="Gene3D" id="3.40.50.10490">
    <property type="entry name" value="Glucose-6-phosphate isomerase like protein, domain 1"/>
    <property type="match status" value="1"/>
</dbReference>
<dbReference type="Gene3D" id="1.10.287.610">
    <property type="entry name" value="Helix hairpin bin"/>
    <property type="match status" value="1"/>
</dbReference>
<dbReference type="HAMAP" id="MF_00291_B">
    <property type="entry name" value="Ribosomal_uS2_B"/>
    <property type="match status" value="1"/>
</dbReference>
<dbReference type="InterPro" id="IPR001865">
    <property type="entry name" value="Ribosomal_uS2"/>
</dbReference>
<dbReference type="InterPro" id="IPR005706">
    <property type="entry name" value="Ribosomal_uS2_bac/mit/plastid"/>
</dbReference>
<dbReference type="InterPro" id="IPR018130">
    <property type="entry name" value="Ribosomal_uS2_CS"/>
</dbReference>
<dbReference type="InterPro" id="IPR023591">
    <property type="entry name" value="Ribosomal_uS2_flav_dom_sf"/>
</dbReference>
<dbReference type="NCBIfam" id="TIGR01011">
    <property type="entry name" value="rpsB_bact"/>
    <property type="match status" value="1"/>
</dbReference>
<dbReference type="PANTHER" id="PTHR12534">
    <property type="entry name" value="30S RIBOSOMAL PROTEIN S2 PROKARYOTIC AND ORGANELLAR"/>
    <property type="match status" value="1"/>
</dbReference>
<dbReference type="PANTHER" id="PTHR12534:SF0">
    <property type="entry name" value="SMALL RIBOSOMAL SUBUNIT PROTEIN US2M"/>
    <property type="match status" value="1"/>
</dbReference>
<dbReference type="Pfam" id="PF00318">
    <property type="entry name" value="Ribosomal_S2"/>
    <property type="match status" value="1"/>
</dbReference>
<dbReference type="PRINTS" id="PR00395">
    <property type="entry name" value="RIBOSOMALS2"/>
</dbReference>
<dbReference type="SUPFAM" id="SSF52313">
    <property type="entry name" value="Ribosomal protein S2"/>
    <property type="match status" value="1"/>
</dbReference>
<dbReference type="PROSITE" id="PS00962">
    <property type="entry name" value="RIBOSOMAL_S2_1"/>
    <property type="match status" value="1"/>
</dbReference>
<dbReference type="PROSITE" id="PS00963">
    <property type="entry name" value="RIBOSOMAL_S2_2"/>
    <property type="match status" value="1"/>
</dbReference>
<evidence type="ECO:0000255" key="1">
    <source>
        <dbReference type="HAMAP-Rule" id="MF_00291"/>
    </source>
</evidence>
<evidence type="ECO:0000256" key="2">
    <source>
        <dbReference type="SAM" id="MobiDB-lite"/>
    </source>
</evidence>
<evidence type="ECO:0000305" key="3"/>
<proteinExistence type="inferred from homology"/>